<evidence type="ECO:0000250" key="1"/>
<evidence type="ECO:0000250" key="2">
    <source>
        <dbReference type="UniProtKB" id="P05107"/>
    </source>
</evidence>
<evidence type="ECO:0000250" key="3">
    <source>
        <dbReference type="UniProtKB" id="P05556"/>
    </source>
</evidence>
<evidence type="ECO:0000255" key="4"/>
<evidence type="ECO:0000255" key="5">
    <source>
        <dbReference type="PROSITE-ProRule" id="PRU01392"/>
    </source>
</evidence>
<evidence type="ECO:0000256" key="6">
    <source>
        <dbReference type="SAM" id="MobiDB-lite"/>
    </source>
</evidence>
<evidence type="ECO:0000269" key="7">
    <source>
    </source>
</evidence>
<evidence type="ECO:0000269" key="8">
    <source>
    </source>
</evidence>
<evidence type="ECO:0000269" key="9">
    <source>
    </source>
</evidence>
<evidence type="ECO:0000269" key="10">
    <source>
    </source>
</evidence>
<evidence type="ECO:0000269" key="11">
    <source>
    </source>
</evidence>
<evidence type="ECO:0000269" key="12">
    <source>
    </source>
</evidence>
<evidence type="ECO:0000269" key="13">
    <source>
    </source>
</evidence>
<evidence type="ECO:0000303" key="14">
    <source>
    </source>
</evidence>
<evidence type="ECO:0000305" key="15"/>
<evidence type="ECO:0000305" key="16">
    <source>
    </source>
</evidence>
<evidence type="ECO:0007744" key="17">
    <source>
        <dbReference type="PDB" id="2BRQ"/>
    </source>
</evidence>
<evidence type="ECO:0007744" key="18">
    <source>
        <dbReference type="PDB" id="3V4P"/>
    </source>
</evidence>
<evidence type="ECO:0007744" key="19">
    <source>
        <dbReference type="PDB" id="3V4V"/>
    </source>
</evidence>
<evidence type="ECO:0007829" key="20">
    <source>
        <dbReference type="PDB" id="2BRQ"/>
    </source>
</evidence>
<evidence type="ECO:0007829" key="21">
    <source>
        <dbReference type="PDB" id="3V4V"/>
    </source>
</evidence>
<evidence type="ECO:0007829" key="22">
    <source>
        <dbReference type="PDB" id="8ZJF"/>
    </source>
</evidence>
<gene>
    <name type="primary">ITGB7</name>
</gene>
<reference key="1">
    <citation type="journal article" date="1990" name="Int. Immunol.">
        <title>Cloning and sequence analysis of a novel beta 2-related integrin transcript from T lymphocytes: homology of integrin cysteine-rich repeats to domain III of laminin B chains.</title>
        <authorList>
            <person name="Yuan Q."/>
            <person name="Jiang W.-M."/>
            <person name="Krissansen G.W."/>
            <person name="Watson J.D."/>
        </authorList>
    </citation>
    <scope>NUCLEOTIDE SEQUENCE [MRNA] (ISOFORM LONG)</scope>
    <source>
        <tissue>T-cell</tissue>
    </source>
</reference>
<reference key="2">
    <citation type="journal article" date="1991" name="Int. Immunol.">
        <title>Cloning and sequence analysis of a novel beta 2-related integrin transcript from T lymphocytes: homology of integrin cysteine-rich repeats to domain III of laminin B chains.</title>
        <authorList>
            <person name="Yuan Q."/>
            <person name="Jiang W.-M."/>
            <person name="Krissansen G.W."/>
            <person name="Watson J.D."/>
        </authorList>
    </citation>
    <scope>SEQUENCE REVISION</scope>
</reference>
<reference key="3">
    <citation type="journal article" date="1991" name="J. Biol. Chem.">
        <title>Complete amino acid sequence of an integrin beta subunit (beta 7) identified in leukocytes.</title>
        <authorList>
            <person name="Erle D.J."/>
            <person name="Rueegg C."/>
            <person name="Sheppard D."/>
            <person name="Pytela R."/>
        </authorList>
    </citation>
    <scope>NUCLEOTIDE SEQUENCE [MRNA] (ISOFORMS LONG AND SHORT)</scope>
    <source>
        <tissue>Leukocyte</tissue>
    </source>
</reference>
<reference key="4">
    <citation type="journal article" date="1992" name="Int. Immunol.">
        <title>The gene organization of the human beta 7 subunit, the common beta subunit of the leukocyte integrins HML-1 and LPAM-1.</title>
        <authorList>
            <person name="Jiang W.-M."/>
            <person name="Jenkins D."/>
            <person name="Yuan Q."/>
            <person name="Leung E."/>
            <person name="Choo K.H."/>
            <person name="Watson J.D."/>
            <person name="Krissansen G.W."/>
        </authorList>
    </citation>
    <scope>NUCLEOTIDE SEQUENCE [GENOMIC DNA]</scope>
</reference>
<reference key="5">
    <citation type="journal article" date="2004" name="Genome Res.">
        <title>The status, quality, and expansion of the NIH full-length cDNA project: the Mammalian Gene Collection (MGC).</title>
        <authorList>
            <consortium name="The MGC Project Team"/>
        </authorList>
    </citation>
    <scope>NUCLEOTIDE SEQUENCE [LARGE SCALE MRNA] (ISOFORM LONG)</scope>
    <source>
        <tissue>Colon</tissue>
    </source>
</reference>
<reference key="6">
    <citation type="journal article" date="1992" name="Proc. Natl. Acad. Sci. U.S.A.">
        <title>A family of beta 7 integrins on human mucosal lymphocytes.</title>
        <authorList>
            <person name="Parker C.M."/>
            <person name="Cepek K.L."/>
            <person name="Russell G.J."/>
            <person name="Shaw S.K."/>
            <person name="Posnett D.N."/>
            <person name="Schwarting R."/>
            <person name="Brenner M.B."/>
        </authorList>
    </citation>
    <scope>PROTEIN SEQUENCE OF 20-36</scope>
    <scope>INTERACTION WITH INTEGRIN ALPHA-4 AND INTEGRIN ALPHA-E</scope>
    <scope>INDUCTION</scope>
</reference>
<reference key="7">
    <citation type="journal article" date="1991" name="Am. J. Pathol.">
        <title>HML-1 antigen on mucosa-associated T cells, activated cells, and hairy leukemic cells is a new integrin containing the beta 7 subunit.</title>
        <authorList>
            <person name="Micklem K.J."/>
            <person name="Dong Y."/>
            <person name="Willis A."/>
            <person name="Pulford K.A."/>
            <person name="Visser L."/>
            <person name="Duerkop H."/>
            <person name="Poppema S."/>
            <person name="Stein H."/>
            <person name="Mason D.Y."/>
        </authorList>
    </citation>
    <scope>PROTEIN SEQUENCE OF 20-34</scope>
    <source>
        <tissue>Leukemia</tissue>
    </source>
</reference>
<reference key="8">
    <citation type="journal article" date="2000" name="J. Biol. Chem.">
        <title>The role of alpha and beta chains in ligand recognition by beta 7 integrins.</title>
        <authorList>
            <person name="Higgins J.M.G."/>
            <person name="Cernadas M."/>
            <person name="Tan K."/>
            <person name="Irie A."/>
            <person name="Wang J.-H."/>
            <person name="Takada Y."/>
            <person name="Brenner M.B."/>
        </authorList>
    </citation>
    <scope>FUNCTION</scope>
    <scope>INTERACTION WITH MADCAM1</scope>
    <scope>MUTAGENESIS OF ASP-159</scope>
</reference>
<reference key="9">
    <citation type="journal article" date="2002" name="Cell">
        <title>Integrins: bidirectional, allosteric signaling machines.</title>
        <authorList>
            <person name="Hynes R.O."/>
        </authorList>
    </citation>
    <scope>REVIEW</scope>
</reference>
<reference key="10">
    <citation type="journal article" date="2003" name="Nat. Struct. Biol.">
        <title>Bistable regulation of integrin adhesiveness by a bipolar metal ion cluster.</title>
        <authorList>
            <person name="Chen J."/>
            <person name="Salas A."/>
            <person name="Springer T.A."/>
        </authorList>
    </citation>
    <scope>FUNCTION</scope>
    <scope>DOMAIN</scope>
</reference>
<reference key="11">
    <citation type="journal article" date="2008" name="Nat. Immunol.">
        <title>HIV-1 envelope protein binds to and signals through integrin alpha4beta7, the gut mucosal homing receptor for peripheral T cells.</title>
        <authorList>
            <person name="Arthos J."/>
            <person name="Cicala C."/>
            <person name="Martinelli E."/>
            <person name="Macleod K."/>
            <person name="Van Ryk D."/>
            <person name="Wei D."/>
            <person name="Xiao Z."/>
            <person name="Veenstra T.D."/>
            <person name="Conrad T.P."/>
            <person name="Lempicki R.A."/>
            <person name="McLaughlin S."/>
            <person name="Pascuccio M."/>
            <person name="Gopaul R."/>
            <person name="McNally J."/>
            <person name="Cruz C.C."/>
            <person name="Censoplano N."/>
            <person name="Chung E."/>
            <person name="Reitano K.N."/>
            <person name="Kottilil S."/>
            <person name="Goode D.J."/>
            <person name="Fauci A.S."/>
        </authorList>
    </citation>
    <scope>FUNCTION (MICROBIAL INFECTION)</scope>
    <scope>INTERACTION WITH HIV-1 GP120 (MICROBIAL INFECTION)</scope>
</reference>
<reference key="12">
    <citation type="journal article" date="2009" name="J. Biol. Chem.">
        <title>Identification and characterization of multiple similar ligand-binding repeats in filamin: implication on filamin-mediated receptor clustering and cross-talk.</title>
        <authorList>
            <person name="Ithychanda S.S."/>
            <person name="Hsu D."/>
            <person name="Li H."/>
            <person name="Yan L."/>
            <person name="Liu D.D."/>
            <person name="Liu D."/>
            <person name="Das M."/>
            <person name="Plow E.F."/>
            <person name="Qin J."/>
        </authorList>
    </citation>
    <scope>INTERACTION WITH FLNA</scope>
</reference>
<reference evidence="17" key="13">
    <citation type="journal article" date="2006" name="Mol. Cell">
        <title>The molecular basis of filamin binding to integrins and competition with talin.</title>
        <authorList>
            <person name="Kiema T."/>
            <person name="Lad Y."/>
            <person name="Jiang P."/>
            <person name="Oxley C.L."/>
            <person name="Baldassarre M."/>
            <person name="Wegener K.L."/>
            <person name="Campbell I.D."/>
            <person name="Ylanne J."/>
            <person name="Calderwood D.A."/>
        </authorList>
    </citation>
    <scope>X-RAY CRYSTALLOGRAPHY (2.1 ANGSTROMS) OF 768-798</scope>
</reference>
<reference evidence="18 19" key="14">
    <citation type="journal article" date="2012" name="J. Cell Biol.">
        <title>Structural specializations of alpha(4)beta(7), an integrin that mediates rolling adhesion.</title>
        <authorList>
            <person name="Yu Y."/>
            <person name="Zhu J."/>
            <person name="Mi L.Z."/>
            <person name="Walz T."/>
            <person name="Sun H."/>
            <person name="Chen J."/>
            <person name="Springer T.A."/>
        </authorList>
    </citation>
    <scope>X-RAY CRYSTALLOGRAPHY (3.10 ANGSTROMS) OF 20-512 IN COMPLEX WITH ITGA4; ANTIBODY; CALCIUM; MAGNESIUM AND INHIBITOR</scope>
    <scope>GLYCOSYLATION AT ASN-279 AND ASN-434</scope>
    <scope>DISULFIDE BONDS</scope>
</reference>
<organism>
    <name type="scientific">Homo sapiens</name>
    <name type="common">Human</name>
    <dbReference type="NCBI Taxonomy" id="9606"/>
    <lineage>
        <taxon>Eukaryota</taxon>
        <taxon>Metazoa</taxon>
        <taxon>Chordata</taxon>
        <taxon>Craniata</taxon>
        <taxon>Vertebrata</taxon>
        <taxon>Euteleostomi</taxon>
        <taxon>Mammalia</taxon>
        <taxon>Eutheria</taxon>
        <taxon>Euarchontoglires</taxon>
        <taxon>Primates</taxon>
        <taxon>Haplorrhini</taxon>
        <taxon>Catarrhini</taxon>
        <taxon>Hominidae</taxon>
        <taxon>Homo</taxon>
    </lineage>
</organism>
<keyword id="KW-0002">3D-structure</keyword>
<keyword id="KW-0025">Alternative splicing</keyword>
<keyword id="KW-0106">Calcium</keyword>
<keyword id="KW-0130">Cell adhesion</keyword>
<keyword id="KW-1003">Cell membrane</keyword>
<keyword id="KW-0903">Direct protein sequencing</keyword>
<keyword id="KW-1015">Disulfide bond</keyword>
<keyword id="KW-0245">EGF-like domain</keyword>
<keyword id="KW-0325">Glycoprotein</keyword>
<keyword id="KW-1183">Host cell receptor for virus entry</keyword>
<keyword id="KW-0401">Integrin</keyword>
<keyword id="KW-0460">Magnesium</keyword>
<keyword id="KW-0472">Membrane</keyword>
<keyword id="KW-0479">Metal-binding</keyword>
<keyword id="KW-0597">Phosphoprotein</keyword>
<keyword id="KW-1267">Proteomics identification</keyword>
<keyword id="KW-0675">Receptor</keyword>
<keyword id="KW-1185">Reference proteome</keyword>
<keyword id="KW-0677">Repeat</keyword>
<keyword id="KW-0732">Signal</keyword>
<keyword id="KW-0812">Transmembrane</keyword>
<keyword id="KW-1133">Transmembrane helix</keyword>
<proteinExistence type="evidence at protein level"/>
<feature type="signal peptide" evidence="9 10">
    <location>
        <begin position="1"/>
        <end position="19"/>
    </location>
</feature>
<feature type="chain" id="PRO_0000016352" description="Integrin beta-7">
    <location>
        <begin position="20"/>
        <end position="798"/>
    </location>
</feature>
<feature type="topological domain" description="Extracellular" evidence="4">
    <location>
        <begin position="20"/>
        <end position="723"/>
    </location>
</feature>
<feature type="transmembrane region" description="Helical" evidence="4">
    <location>
        <begin position="724"/>
        <end position="746"/>
    </location>
</feature>
<feature type="topological domain" description="Cytoplasmic" evidence="4">
    <location>
        <begin position="747"/>
        <end position="798"/>
    </location>
</feature>
<feature type="domain" description="PSI" evidence="4">
    <location>
        <begin position="44"/>
        <end position="92"/>
    </location>
</feature>
<feature type="domain" description="VWFA" evidence="7">
    <location>
        <begin position="150"/>
        <end position="389"/>
    </location>
</feature>
<feature type="domain" description="I-EGF 1" evidence="5">
    <location>
        <begin position="478"/>
        <end position="512"/>
    </location>
</feature>
<feature type="domain" description="I-EGF 2" evidence="5">
    <location>
        <begin position="513"/>
        <end position="560"/>
    </location>
</feature>
<feature type="domain" description="I-EGF 3" evidence="5">
    <location>
        <begin position="561"/>
        <end position="597"/>
    </location>
</feature>
<feature type="domain" description="I-EGF 4" evidence="5">
    <location>
        <begin position="598"/>
        <end position="636"/>
    </location>
</feature>
<feature type="region of interest" description="Disordered" evidence="6">
    <location>
        <begin position="98"/>
        <end position="124"/>
    </location>
</feature>
<feature type="binding site" description="in MIDAS binding site" evidence="13 19">
    <location>
        <position position="161"/>
    </location>
    <ligand>
        <name>Mg(2+)</name>
        <dbReference type="ChEBI" id="CHEBI:18420"/>
    </ligand>
</feature>
<feature type="binding site" description="in ADMIDAS binding site" evidence="13 18 19">
    <location>
        <position position="163"/>
    </location>
    <ligand>
        <name>Ca(2+)</name>
        <dbReference type="ChEBI" id="CHEBI:29108"/>
        <label>1</label>
    </ligand>
</feature>
<feature type="binding site" description="in MIDAS binding site" evidence="13 19">
    <location>
        <position position="163"/>
    </location>
    <ligand>
        <name>Mg(2+)</name>
        <dbReference type="ChEBI" id="CHEBI:18420"/>
    </ligand>
</feature>
<feature type="binding site" description="in ADMIDAS binding site" evidence="13 19">
    <location>
        <position position="166"/>
    </location>
    <ligand>
        <name>Ca(2+)</name>
        <dbReference type="ChEBI" id="CHEBI:29108"/>
        <label>1</label>
    </ligand>
</feature>
<feature type="binding site" description="in ADMIDAS binding site" evidence="13 18">
    <location>
        <position position="167"/>
    </location>
    <ligand>
        <name>Ca(2+)</name>
        <dbReference type="ChEBI" id="CHEBI:29108"/>
        <label>1</label>
    </ligand>
</feature>
<feature type="binding site" description="in LIMBS binding site" evidence="13 18 19">
    <location>
        <position position="198"/>
    </location>
    <ligand>
        <name>Ca(2+)</name>
        <dbReference type="ChEBI" id="CHEBI:29108"/>
        <label>2</label>
    </ligand>
</feature>
<feature type="binding site" description="in LIMBS binding site" evidence="13 18 19">
    <location>
        <position position="254"/>
    </location>
    <ligand>
        <name>Ca(2+)</name>
        <dbReference type="ChEBI" id="CHEBI:29108"/>
        <label>2</label>
    </ligand>
</feature>
<feature type="binding site" description="in LIMBS binding site" evidence="13 18 19">
    <location>
        <position position="256"/>
    </location>
    <ligand>
        <name>Ca(2+)</name>
        <dbReference type="ChEBI" id="CHEBI:29108"/>
        <label>2</label>
    </ligand>
</feature>
<feature type="binding site" description="in LIMBS binding site" evidence="13 18 19">
    <location>
        <position position="258"/>
    </location>
    <ligand>
        <name>Ca(2+)</name>
        <dbReference type="ChEBI" id="CHEBI:29108"/>
        <label>2</label>
    </ligand>
</feature>
<feature type="binding site" description="in LIMBS binding site" evidence="2">
    <location>
        <position position="259"/>
    </location>
    <ligand>
        <name>Ca(2+)</name>
        <dbReference type="ChEBI" id="CHEBI:29108"/>
        <label>2</label>
    </ligand>
</feature>
<feature type="binding site" description="in MIDAS binding site" evidence="13 18 19">
    <location>
        <position position="259"/>
    </location>
    <ligand>
        <name>Mg(2+)</name>
        <dbReference type="ChEBI" id="CHEBI:18420"/>
    </ligand>
</feature>
<feature type="binding site" description="in ADMIDAS binding site and liganded-open conformation" evidence="2">
    <location>
        <position position="289"/>
    </location>
    <ligand>
        <name>Ca(2+)</name>
        <dbReference type="ChEBI" id="CHEBI:29108"/>
        <label>1</label>
    </ligand>
</feature>
<feature type="binding site" description="in ADMIDAS binding site and unliganded-closed conformation" evidence="13 18 19">
    <location>
        <position position="373"/>
    </location>
    <ligand>
        <name>Ca(2+)</name>
        <dbReference type="ChEBI" id="CHEBI:29108"/>
        <label>1</label>
    </ligand>
</feature>
<feature type="modified residue" description="Phosphotyrosine; by Tyr-kinases" evidence="1">
    <location>
        <position position="778"/>
    </location>
</feature>
<feature type="glycosylation site" description="N-linked (GlcNAc...) asparagine" evidence="4">
    <location>
        <position position="68"/>
    </location>
</feature>
<feature type="glycosylation site" description="N-linked (GlcNAc...) asparagine" evidence="13 18 19">
    <location>
        <position position="279"/>
    </location>
</feature>
<feature type="glycosylation site" description="N-linked (GlcNAc...) asparagine" evidence="13 19">
    <location>
        <position position="434"/>
    </location>
</feature>
<feature type="glycosylation site" description="N-linked (GlcNAc...) asparagine" evidence="4">
    <location>
        <position position="477"/>
    </location>
</feature>
<feature type="glycosylation site" description="N-linked (GlcNAc...) asparagine" evidence="4">
    <location>
        <position position="531"/>
    </location>
</feature>
<feature type="glycosylation site" description="N-linked (GlcNAc...) asparagine" evidence="4">
    <location>
        <position position="590"/>
    </location>
</feature>
<feature type="glycosylation site" description="N-linked (GlcNAc...) asparagine" evidence="4">
    <location>
        <position position="665"/>
    </location>
</feature>
<feature type="glycosylation site" description="N-linked (GlcNAc...) asparagine" evidence="4">
    <location>
        <position position="674"/>
    </location>
</feature>
<feature type="disulfide bond" evidence="3">
    <location>
        <begin position="51"/>
        <end position="476"/>
    </location>
</feature>
<feature type="disulfide bond" evidence="3">
    <location>
        <begin position="54"/>
        <end position="80"/>
    </location>
</feature>
<feature type="disulfide bond" evidence="3">
    <location>
        <begin position="64"/>
        <end position="91"/>
    </location>
</feature>
<feature type="disulfide bond" evidence="13 18 19">
    <location>
        <begin position="216"/>
        <end position="223"/>
    </location>
</feature>
<feature type="disulfide bond" evidence="13 18 19">
    <location>
        <begin position="271"/>
        <end position="311"/>
    </location>
</feature>
<feature type="disulfide bond" evidence="13 18 19">
    <location>
        <begin position="412"/>
        <end position="428"/>
    </location>
</feature>
<feature type="disulfide bond" evidence="13 18 19">
    <location>
        <begin position="448"/>
        <end position="474"/>
    </location>
</feature>
<feature type="disulfide bond" evidence="5">
    <location>
        <begin position="478"/>
        <end position="497"/>
    </location>
</feature>
<feature type="disulfide bond" evidence="5">
    <location>
        <begin position="488"/>
        <end position="500"/>
    </location>
</feature>
<feature type="disulfide bond" evidence="5">
    <location>
        <begin position="502"/>
        <end position="511"/>
    </location>
</feature>
<feature type="disulfide bond" evidence="5">
    <location>
        <begin position="513"/>
        <end position="545"/>
    </location>
</feature>
<feature type="disulfide bond" evidence="5">
    <location>
        <begin position="527"/>
        <end position="543"/>
    </location>
</feature>
<feature type="disulfide bond" evidence="5">
    <location>
        <begin position="537"/>
        <end position="548"/>
    </location>
</feature>
<feature type="disulfide bond" evidence="5">
    <location>
        <begin position="550"/>
        <end position="559"/>
    </location>
</feature>
<feature type="disulfide bond" evidence="5">
    <location>
        <begin position="561"/>
        <end position="582"/>
    </location>
</feature>
<feature type="disulfide bond" evidence="5">
    <location>
        <begin position="566"/>
        <end position="580"/>
    </location>
</feature>
<feature type="disulfide bond" evidence="5">
    <location>
        <begin position="574"/>
        <end position="585"/>
    </location>
</feature>
<feature type="disulfide bond" evidence="5">
    <location>
        <begin position="587"/>
        <end position="596"/>
    </location>
</feature>
<feature type="disulfide bond" evidence="5">
    <location>
        <begin position="598"/>
        <end position="621"/>
    </location>
</feature>
<feature type="disulfide bond" evidence="5">
    <location>
        <begin position="605"/>
        <end position="619"/>
    </location>
</feature>
<feature type="disulfide bond" evidence="5">
    <location>
        <begin position="613"/>
        <end position="624"/>
    </location>
</feature>
<feature type="disulfide bond" evidence="5">
    <location>
        <begin position="626"/>
        <end position="635"/>
    </location>
</feature>
<feature type="disulfide bond" evidence="3">
    <location>
        <begin position="638"/>
        <end position="641"/>
    </location>
</feature>
<feature type="disulfide bond" evidence="3">
    <location>
        <begin position="645"/>
        <end position="688"/>
    </location>
</feature>
<feature type="disulfide bond" evidence="3">
    <location>
        <begin position="651"/>
        <end position="670"/>
    </location>
</feature>
<feature type="disulfide bond" evidence="3">
    <location>
        <begin position="654"/>
        <end position="666"/>
    </location>
</feature>
<feature type="splice variant" id="VSP_002753" description="In isoform Short." evidence="14">
    <location>
        <begin position="501"/>
        <end position="648"/>
    </location>
</feature>
<feature type="sequence variant" id="VAR_049637" description="In dbSNP:rs11539433.">
    <original>H</original>
    <variation>Y</variation>
    <location>
        <position position="672"/>
    </location>
</feature>
<feature type="mutagenesis site" description="Loss of integrin alpha-E/beta-7 binding to E-cadherin and of integrin alpha-4/beta-7 binding to MADCAM1." evidence="7">
    <original>D</original>
    <variation>A</variation>
    <location>
        <position position="159"/>
    </location>
</feature>
<feature type="sequence conflict" description="In Ref. 7; AA sequence." evidence="15" ref="7">
    <original>W</original>
    <variation>A</variation>
    <location>
        <position position="34"/>
    </location>
</feature>
<feature type="helix" evidence="22">
    <location>
        <begin position="51"/>
        <end position="57"/>
    </location>
</feature>
<feature type="turn" evidence="22">
    <location>
        <begin position="69"/>
        <end position="73"/>
    </location>
</feature>
<feature type="helix" evidence="22">
    <location>
        <begin position="84"/>
        <end position="87"/>
    </location>
</feature>
<feature type="strand" evidence="22">
    <location>
        <begin position="88"/>
        <end position="90"/>
    </location>
</feature>
<feature type="strand" evidence="22">
    <location>
        <begin position="102"/>
        <end position="107"/>
    </location>
</feature>
<feature type="turn" evidence="22">
    <location>
        <begin position="114"/>
        <end position="116"/>
    </location>
</feature>
<feature type="strand" evidence="22">
    <location>
        <begin position="117"/>
        <end position="120"/>
    </location>
</feature>
<feature type="strand" evidence="22">
    <location>
        <begin position="127"/>
        <end position="132"/>
    </location>
</feature>
<feature type="strand" evidence="22">
    <location>
        <begin position="138"/>
        <end position="145"/>
    </location>
</feature>
<feature type="strand" evidence="22">
    <location>
        <begin position="152"/>
        <end position="159"/>
    </location>
</feature>
<feature type="strand" evidence="22">
    <location>
        <begin position="161"/>
        <end position="163"/>
    </location>
</feature>
<feature type="helix" evidence="22">
    <location>
        <begin position="165"/>
        <end position="171"/>
    </location>
</feature>
<feature type="turn" evidence="22">
    <location>
        <begin position="172"/>
        <end position="174"/>
    </location>
</feature>
<feature type="helix" evidence="22">
    <location>
        <begin position="175"/>
        <end position="182"/>
    </location>
</feature>
<feature type="turn" evidence="22">
    <location>
        <begin position="183"/>
        <end position="185"/>
    </location>
</feature>
<feature type="strand" evidence="22">
    <location>
        <begin position="189"/>
        <end position="196"/>
    </location>
</feature>
<feature type="turn" evidence="22">
    <location>
        <begin position="202"/>
        <end position="204"/>
    </location>
</feature>
<feature type="helix" evidence="22">
    <location>
        <begin position="209"/>
        <end position="213"/>
    </location>
</feature>
<feature type="strand" evidence="22">
    <location>
        <begin position="219"/>
        <end position="221"/>
    </location>
</feature>
<feature type="strand" evidence="22">
    <location>
        <begin position="230"/>
        <end position="237"/>
    </location>
</feature>
<feature type="helix" evidence="22">
    <location>
        <begin position="239"/>
        <end position="248"/>
    </location>
</feature>
<feature type="strand" evidence="22">
    <location>
        <begin position="255"/>
        <end position="259"/>
    </location>
</feature>
<feature type="helix" evidence="22">
    <location>
        <begin position="261"/>
        <end position="270"/>
    </location>
</feature>
<feature type="helix" evidence="22">
    <location>
        <begin position="272"/>
        <end position="275"/>
    </location>
</feature>
<feature type="strand" evidence="22">
    <location>
        <begin position="279"/>
        <end position="290"/>
    </location>
</feature>
<feature type="helix" evidence="22">
    <location>
        <begin position="295"/>
        <end position="301"/>
    </location>
</feature>
<feature type="strand" evidence="21">
    <location>
        <begin position="317"/>
        <end position="319"/>
    </location>
</feature>
<feature type="helix" evidence="22">
    <location>
        <begin position="320"/>
        <end position="322"/>
    </location>
</feature>
<feature type="helix" evidence="22">
    <location>
        <begin position="330"/>
        <end position="339"/>
    </location>
</feature>
<feature type="strand" evidence="22">
    <location>
        <begin position="342"/>
        <end position="348"/>
    </location>
</feature>
<feature type="helix" evidence="22">
    <location>
        <begin position="350"/>
        <end position="352"/>
    </location>
</feature>
<feature type="helix" evidence="22">
    <location>
        <begin position="353"/>
        <end position="361"/>
    </location>
</feature>
<feature type="strand" evidence="22">
    <location>
        <begin position="362"/>
        <end position="365"/>
    </location>
</feature>
<feature type="strand" evidence="22">
    <location>
        <begin position="367"/>
        <end position="370"/>
    </location>
</feature>
<feature type="helix" evidence="22">
    <location>
        <begin position="378"/>
        <end position="390"/>
    </location>
</feature>
<feature type="strand" evidence="21">
    <location>
        <begin position="393"/>
        <end position="396"/>
    </location>
</feature>
<feature type="strand" evidence="22">
    <location>
        <begin position="404"/>
        <end position="407"/>
    </location>
</feature>
<feature type="strand" evidence="22">
    <location>
        <begin position="413"/>
        <end position="416"/>
    </location>
</feature>
<feature type="strand" evidence="21">
    <location>
        <begin position="423"/>
        <end position="428"/>
    </location>
</feature>
<feature type="strand" evidence="22">
    <location>
        <begin position="436"/>
        <end position="447"/>
    </location>
</feature>
<feature type="strand" evidence="22">
    <location>
        <begin position="453"/>
        <end position="459"/>
    </location>
</feature>
<feature type="strand" evidence="22">
    <location>
        <begin position="465"/>
        <end position="472"/>
    </location>
</feature>
<feature type="strand" evidence="22">
    <location>
        <begin position="486"/>
        <end position="492"/>
    </location>
</feature>
<feature type="strand" evidence="22">
    <location>
        <begin position="497"/>
        <end position="499"/>
    </location>
</feature>
<feature type="strand" evidence="22">
    <location>
        <begin position="508"/>
        <end position="512"/>
    </location>
</feature>
<feature type="helix" evidence="22">
    <location>
        <begin position="516"/>
        <end position="519"/>
    </location>
</feature>
<feature type="helix" evidence="22">
    <location>
        <begin position="522"/>
        <end position="525"/>
    </location>
</feature>
<feature type="turn" evidence="22">
    <location>
        <begin position="538"/>
        <end position="540"/>
    </location>
</feature>
<feature type="turn" evidence="22">
    <location>
        <begin position="556"/>
        <end position="558"/>
    </location>
</feature>
<feature type="strand" evidence="20">
    <location>
        <begin position="777"/>
        <end position="786"/>
    </location>
</feature>
<sequence length="798" mass="86903">MVALPMVLVLLLVLSRGESELDAKIPSTGDATEWRNPHLSMLGSCQPAPSCQKCILSHPSCAWCKQLNFTASGEAEARRCARREELLARGCPLEELEEPRGQQEVLQDQPLSQGARGEGATQLAPQRVRVTLRPGEPQQLQVRFLRAEGYPVDLYYLMDLSYSMKDDLERVRQLGHALLVRLQEVTHSVRIGFGSFVDKTVLPFVSTVPSKLRHPCPTRLERCQSPFSFHHVLSLTGDAQAFEREVGRQSVSGNLDSPEGGFDAILQAALCQEQIGWRNVSRLLVFTSDDTFHTAGDGKLGGIFMPSDGHCHLDSNGLYSRSTEFDYPSVGQVAQALSAANIQPIFAVTSAALPVYQELSKLIPKSAVGELSEDSSNVVQLIMDAYNSLSSTVTLEHSSLPPGVHISYESQCEGPEKREGKAEDRGQCNHVRINQTVTFWVSLQATHCLPEPHLLRLRALGFSEELIVELHTLCDCNCSDTQPQAPHCSDGQGHLQCGVCSCAPGRLGRLCECSVAELSSPDLESGCRAPNGTGPLCSGKGHCQCGRCSCSGQSSGHLCECDDASCERHEGILCGGFGRCQCGVCHCHANRTGRACECSGDMDSCISPEGGLCSGHGRCKCNRCQCLDGYYGALCDQCPGCKTPCERHRDCAECGAFRTGPLATNCSTACAHTNVTLALAPILDDGWCKERTLDNQLFFFLVEDDARGTVVLRVRPQEKGADHTQAIVLGCVGGIVAVGLGLVLAYRLSVEIYDRREYSRFEKEQQQLNWKQDSNPLYKSAITTTINPRFQEADSPTL</sequence>
<accession>P26010</accession>
<accession>Q9UCP7</accession>
<accession>Q9UCS7</accession>
<protein>
    <recommendedName>
        <fullName>Integrin beta-7</fullName>
    </recommendedName>
    <alternativeName>
        <fullName>Gut homing receptor beta subunit</fullName>
    </alternativeName>
</protein>
<comment type="function">
    <text evidence="7 8 16">Integrin ITGA4/ITGB7 (alpha-4/beta-7) (Peyer patches-specific homing receptor LPAM-1) is an adhesion molecule that mediates lymphocyte migration and homing to gut-associated lymphoid tissue (GALT) (Probable). Integrin ITGA4/ITGB7 interacts with the cell surface adhesion molecules MADCAM1 which is normally expressed by the vascular endothelium of the gastrointestinal tract (PubMed:10837471, PubMed:14608374). Also interacts with VCAM1 and fibronectin, an extracellular matrix component (Probable). It recognizes one or more domains within the alternatively spliced CS-1 region of fibronectin (Probable). Interactions involve the tripeptide L-D-T in MADCAM1, and L-D-V in fibronectin (Probable). Integrin ITGAE/ITGB7 (alpha-E/beta-7, HML-1) is a receptor for E-cadherin (PubMed:10837471).</text>
</comment>
<comment type="function">
    <text evidence="11">(Microbial infection) Binds to HIV-1 gp120, thereby allowing the virus to enter GALT, which is thought to be the major trigger of AIDS disease. Interaction would involve a tripeptide L-D-I in HIV-1 gp120.</text>
</comment>
<comment type="subunit">
    <text evidence="7 9 12 16">Heterodimer of an alpha and a beta subunit (PubMed:1542691). ITGB7/beta-7 associates with either ITGA4/alpha-4 or ITGAE/alpha-E (PubMed:1542691). Integrin ITGA4/ITGB7 interacts with MADCAM1 (PubMed:10837471). Integrin ITGA4/ITGB7 interacts with VCAM1 and fibronectin (Probable). Interacts with FLNA (via filamin repeats 4, 9, 12, 17, 19, 21, and 23) (PubMed:19828450).</text>
</comment>
<comment type="subunit">
    <text evidence="11">(Microbial infection) May interact with HIV-1 gp120.</text>
</comment>
<comment type="interaction">
    <interactant intactId="EBI-702932">
        <id>P26010</id>
    </interactant>
    <interactant intactId="EBI-350432">
        <id>P21333</id>
        <label>FLNA</label>
    </interactant>
    <organismsDiffer>false</organismsDiffer>
    <experiments>6</experiments>
</comment>
<comment type="interaction">
    <interactant intactId="EBI-702932">
        <id>P26010</id>
    </interactant>
    <interactant intactId="EBI-703044">
        <id>P13612</id>
        <label>ITGA4</label>
    </interactant>
    <organismsDiffer>false</organismsDiffer>
    <experiments>6</experiments>
</comment>
<comment type="interaction">
    <interactant intactId="EBI-15944630">
        <id>P26010-1</id>
    </interactant>
    <interactant intactId="EBI-350432">
        <id>P21333</id>
        <label>FLNA</label>
    </interactant>
    <organismsDiffer>false</organismsDiffer>
    <experiments>2</experiments>
</comment>
<comment type="subcellular location">
    <subcellularLocation>
        <location evidence="15">Cell membrane</location>
        <topology evidence="4">Single-pass type I membrane protein</topology>
    </subcellularLocation>
</comment>
<comment type="alternative products">
    <event type="alternative splicing"/>
    <isoform>
        <id>P26010-1</id>
        <name>Long</name>
        <sequence type="displayed"/>
    </isoform>
    <isoform>
        <id>P26010-2</id>
        <name>Short</name>
        <sequence type="described" ref="VSP_002753"/>
    </isoform>
</comment>
<comment type="tissue specificity">
    <text>Expressed in a variety of leukocyte lines.</text>
</comment>
<comment type="induction">
    <text evidence="9">Induced by TGFB1.</text>
</comment>
<comment type="domain">
    <text evidence="8">The VWFA domain (or beta I domain) contains three cation-binding sites: the ligand-associated metal ion-binding site (LIMBS or SyMBS), the metal ion-dependent adhesion site (MIDAS), and the adjacent MIDAS site (ADMIDAS) (PubMed:14608374). This domain is also part of the ligand-binding site (PubMed:14608374). The MIDAS site is required for both rolling and adhesion (PubMed:14608374). The ADMIDAS site is required for rolling and mediates the negative regulatory effects of higher Ca(2+) concentration on ligand binding (PubMed:14608374). The LIMBS site is required for adhesion and mediates the positive regulatory effects of low Ca(2+) concentrations on ligand binding (PubMed:14608374).</text>
</comment>
<comment type="similarity">
    <text evidence="15">Belongs to the integrin beta chain family.</text>
</comment>
<dbReference type="EMBL" id="M68892">
    <property type="protein sequence ID" value="AAA59184.1"/>
    <property type="molecule type" value="mRNA"/>
</dbReference>
<dbReference type="EMBL" id="S80335">
    <property type="protein sequence ID" value="AAB21332.1"/>
    <property type="molecule type" value="mRNA"/>
</dbReference>
<dbReference type="EMBL" id="M62880">
    <property type="protein sequence ID" value="AAA59185.1"/>
    <property type="molecule type" value="mRNA"/>
</dbReference>
<dbReference type="EMBL" id="L23823">
    <property type="protein sequence ID" value="AAA36118.1"/>
    <property type="molecule type" value="Genomic_DNA"/>
</dbReference>
<dbReference type="EMBL" id="L23810">
    <property type="protein sequence ID" value="AAA36118.1"/>
    <property type="status" value="JOINED"/>
    <property type="molecule type" value="Genomic_DNA"/>
</dbReference>
<dbReference type="EMBL" id="L23811">
    <property type="protein sequence ID" value="AAA36118.1"/>
    <property type="status" value="JOINED"/>
    <property type="molecule type" value="Genomic_DNA"/>
</dbReference>
<dbReference type="EMBL" id="L23812">
    <property type="protein sequence ID" value="AAA36118.1"/>
    <property type="status" value="JOINED"/>
    <property type="molecule type" value="Genomic_DNA"/>
</dbReference>
<dbReference type="EMBL" id="L23813">
    <property type="protein sequence ID" value="AAA36118.1"/>
    <property type="status" value="JOINED"/>
    <property type="molecule type" value="Genomic_DNA"/>
</dbReference>
<dbReference type="EMBL" id="L23814">
    <property type="protein sequence ID" value="AAA36118.1"/>
    <property type="status" value="JOINED"/>
    <property type="molecule type" value="Genomic_DNA"/>
</dbReference>
<dbReference type="EMBL" id="L23815">
    <property type="protein sequence ID" value="AAA36118.1"/>
    <property type="status" value="JOINED"/>
    <property type="molecule type" value="Genomic_DNA"/>
</dbReference>
<dbReference type="EMBL" id="L23816">
    <property type="protein sequence ID" value="AAA36118.1"/>
    <property type="status" value="JOINED"/>
    <property type="molecule type" value="Genomic_DNA"/>
</dbReference>
<dbReference type="EMBL" id="L23817">
    <property type="protein sequence ID" value="AAA36118.1"/>
    <property type="status" value="JOINED"/>
    <property type="molecule type" value="Genomic_DNA"/>
</dbReference>
<dbReference type="EMBL" id="L23818">
    <property type="protein sequence ID" value="AAA36118.1"/>
    <property type="status" value="JOINED"/>
    <property type="molecule type" value="Genomic_DNA"/>
</dbReference>
<dbReference type="EMBL" id="L23819">
    <property type="protein sequence ID" value="AAA36118.1"/>
    <property type="status" value="JOINED"/>
    <property type="molecule type" value="Genomic_DNA"/>
</dbReference>
<dbReference type="EMBL" id="L23820">
    <property type="protein sequence ID" value="AAA36118.1"/>
    <property type="status" value="JOINED"/>
    <property type="molecule type" value="Genomic_DNA"/>
</dbReference>
<dbReference type="EMBL" id="L23821">
    <property type="protein sequence ID" value="AAA36118.1"/>
    <property type="status" value="JOINED"/>
    <property type="molecule type" value="Genomic_DNA"/>
</dbReference>
<dbReference type="EMBL" id="L23822">
    <property type="protein sequence ID" value="AAA36118.1"/>
    <property type="status" value="JOINED"/>
    <property type="molecule type" value="Genomic_DNA"/>
</dbReference>
<dbReference type="EMBL" id="S49378">
    <property type="protein sequence ID" value="AAB23688.1"/>
    <property type="molecule type" value="Genomic_DNA"/>
</dbReference>
<dbReference type="EMBL" id="S49364">
    <property type="protein sequence ID" value="AAB23688.1"/>
    <property type="status" value="JOINED"/>
    <property type="molecule type" value="Genomic_DNA"/>
</dbReference>
<dbReference type="EMBL" id="S49365">
    <property type="protein sequence ID" value="AAB23688.1"/>
    <property type="status" value="JOINED"/>
    <property type="molecule type" value="Genomic_DNA"/>
</dbReference>
<dbReference type="EMBL" id="S49366">
    <property type="protein sequence ID" value="AAB23688.1"/>
    <property type="status" value="JOINED"/>
    <property type="molecule type" value="Genomic_DNA"/>
</dbReference>
<dbReference type="EMBL" id="S49367">
    <property type="protein sequence ID" value="AAB23688.1"/>
    <property type="status" value="JOINED"/>
    <property type="molecule type" value="Genomic_DNA"/>
</dbReference>
<dbReference type="EMBL" id="S49368">
    <property type="protein sequence ID" value="AAB23688.1"/>
    <property type="status" value="JOINED"/>
    <property type="molecule type" value="Genomic_DNA"/>
</dbReference>
<dbReference type="EMBL" id="S49369">
    <property type="protein sequence ID" value="AAB23688.1"/>
    <property type="status" value="JOINED"/>
    <property type="molecule type" value="Genomic_DNA"/>
</dbReference>
<dbReference type="EMBL" id="S49370">
    <property type="protein sequence ID" value="AAB23688.1"/>
    <property type="status" value="JOINED"/>
    <property type="molecule type" value="Genomic_DNA"/>
</dbReference>
<dbReference type="EMBL" id="S49371">
    <property type="protein sequence ID" value="AAB23688.1"/>
    <property type="status" value="JOINED"/>
    <property type="molecule type" value="Genomic_DNA"/>
</dbReference>
<dbReference type="EMBL" id="S49373">
    <property type="protein sequence ID" value="AAB23688.1"/>
    <property type="status" value="JOINED"/>
    <property type="molecule type" value="Genomic_DNA"/>
</dbReference>
<dbReference type="EMBL" id="S49374">
    <property type="protein sequence ID" value="AAB23688.1"/>
    <property type="status" value="JOINED"/>
    <property type="molecule type" value="Genomic_DNA"/>
</dbReference>
<dbReference type="EMBL" id="S49375">
    <property type="protein sequence ID" value="AAB23688.1"/>
    <property type="status" value="JOINED"/>
    <property type="molecule type" value="Genomic_DNA"/>
</dbReference>
<dbReference type="EMBL" id="S49376">
    <property type="protein sequence ID" value="AAB23688.1"/>
    <property type="status" value="JOINED"/>
    <property type="molecule type" value="Genomic_DNA"/>
</dbReference>
<dbReference type="EMBL" id="S49377">
    <property type="protein sequence ID" value="AAB23688.1"/>
    <property type="status" value="JOINED"/>
    <property type="molecule type" value="Genomic_DNA"/>
</dbReference>
<dbReference type="EMBL" id="BC015916">
    <property type="protein sequence ID" value="AAH15916.1"/>
    <property type="molecule type" value="mRNA"/>
</dbReference>
<dbReference type="CCDS" id="CCDS8849.1">
    <molecule id="P26010-1"/>
</dbReference>
<dbReference type="PIR" id="A40526">
    <property type="entry name" value="A40526"/>
</dbReference>
<dbReference type="RefSeq" id="NP_000880.1">
    <molecule id="P26010-1"/>
    <property type="nucleotide sequence ID" value="NM_000889.3"/>
</dbReference>
<dbReference type="RefSeq" id="NP_001401085.1">
    <molecule id="P26010-1"/>
    <property type="nucleotide sequence ID" value="NM_001414156.1"/>
</dbReference>
<dbReference type="RefSeq" id="NP_001401086.1">
    <molecule id="P26010-1"/>
    <property type="nucleotide sequence ID" value="NM_001414157.1"/>
</dbReference>
<dbReference type="RefSeq" id="NP_001401087.1">
    <molecule id="P26010-1"/>
    <property type="nucleotide sequence ID" value="NM_001414158.1"/>
</dbReference>
<dbReference type="RefSeq" id="NP_001401088.1">
    <molecule id="P26010-1"/>
    <property type="nucleotide sequence ID" value="NM_001414159.1"/>
</dbReference>
<dbReference type="RefSeq" id="NP_001401089.1">
    <molecule id="P26010-1"/>
    <property type="nucleotide sequence ID" value="NM_001414160.1"/>
</dbReference>
<dbReference type="RefSeq" id="NP_001401090.1">
    <molecule id="P26010-1"/>
    <property type="nucleotide sequence ID" value="NM_001414161.1"/>
</dbReference>
<dbReference type="RefSeq" id="NP_001401098.1">
    <molecule id="P26010-2"/>
    <property type="nucleotide sequence ID" value="NM_001414169.1"/>
</dbReference>
<dbReference type="RefSeq" id="NP_001401099.1">
    <molecule id="P26010-2"/>
    <property type="nucleotide sequence ID" value="NM_001414170.1"/>
</dbReference>
<dbReference type="RefSeq" id="NP_001401100.1">
    <molecule id="P26010-2"/>
    <property type="nucleotide sequence ID" value="NM_001414171.1"/>
</dbReference>
<dbReference type="RefSeq" id="NP_001401101.1">
    <molecule id="P26010-2"/>
    <property type="nucleotide sequence ID" value="NM_001414172.1"/>
</dbReference>
<dbReference type="RefSeq" id="XP_005268908.1">
    <property type="nucleotide sequence ID" value="XM_005268851.3"/>
</dbReference>
<dbReference type="RefSeq" id="XP_005268909.1">
    <property type="nucleotide sequence ID" value="XM_005268852.4"/>
</dbReference>
<dbReference type="PDB" id="2BRQ">
    <property type="method" value="X-ray"/>
    <property type="resolution" value="2.10 A"/>
    <property type="chains" value="C/D=768-798"/>
</dbReference>
<dbReference type="PDB" id="3V4P">
    <property type="method" value="X-ray"/>
    <property type="resolution" value="3.15 A"/>
    <property type="chains" value="B/D=20-512"/>
</dbReference>
<dbReference type="PDB" id="3V4V">
    <property type="method" value="X-ray"/>
    <property type="resolution" value="3.10 A"/>
    <property type="chains" value="B/D=20-512"/>
</dbReference>
<dbReference type="PDB" id="8ZJF">
    <property type="method" value="EM"/>
    <property type="resolution" value="2.70 A"/>
    <property type="chains" value="B=2-798"/>
</dbReference>
<dbReference type="PDBsum" id="2BRQ"/>
<dbReference type="PDBsum" id="3V4P"/>
<dbReference type="PDBsum" id="3V4V"/>
<dbReference type="PDBsum" id="8ZJF"/>
<dbReference type="BMRB" id="P26010"/>
<dbReference type="EMDB" id="EMD-42607"/>
<dbReference type="EMDB" id="EMD-60143"/>
<dbReference type="SMR" id="P26010"/>
<dbReference type="BioGRID" id="109901">
    <property type="interactions" value="63"/>
</dbReference>
<dbReference type="ComplexPortal" id="CPX-1823">
    <property type="entry name" value="Integrin alpha4-beta7 complex"/>
</dbReference>
<dbReference type="ComplexPortal" id="CPX-1824">
    <property type="entry name" value="Integrin alphaE-beta7 complex"/>
</dbReference>
<dbReference type="CORUM" id="P26010"/>
<dbReference type="DIP" id="DIP-34970N"/>
<dbReference type="ELM" id="P26010"/>
<dbReference type="FunCoup" id="P26010">
    <property type="interactions" value="664"/>
</dbReference>
<dbReference type="IntAct" id="P26010">
    <property type="interactions" value="11"/>
</dbReference>
<dbReference type="MINT" id="P26010"/>
<dbReference type="STRING" id="9606.ENSP00000267082"/>
<dbReference type="BindingDB" id="P26010"/>
<dbReference type="ChEMBL" id="CHEMBL2979"/>
<dbReference type="DrugBank" id="DB12189">
    <property type="generic name" value="Etrolizumab"/>
</dbReference>
<dbReference type="DrugBank" id="DB05122">
    <property type="generic name" value="R1295"/>
</dbReference>
<dbReference type="DrugBank" id="DB09033">
    <property type="generic name" value="Vedolizumab"/>
</dbReference>
<dbReference type="DrugCentral" id="P26010"/>
<dbReference type="GuidetoPHARMACOLOGY" id="2461"/>
<dbReference type="GlyCosmos" id="P26010">
    <property type="glycosylation" value="8 sites, No reported glycans"/>
</dbReference>
<dbReference type="GlyGen" id="P26010">
    <property type="glycosylation" value="8 sites, 7 N-linked glycans (1 site)"/>
</dbReference>
<dbReference type="iPTMnet" id="P26010"/>
<dbReference type="PhosphoSitePlus" id="P26010"/>
<dbReference type="BioMuta" id="ITGB7"/>
<dbReference type="DMDM" id="124973"/>
<dbReference type="jPOST" id="P26010"/>
<dbReference type="MassIVE" id="P26010"/>
<dbReference type="PaxDb" id="9606-ENSP00000267082"/>
<dbReference type="PeptideAtlas" id="P26010"/>
<dbReference type="ProteomicsDB" id="54307">
    <molecule id="P26010-1"/>
</dbReference>
<dbReference type="ProteomicsDB" id="54308">
    <molecule id="P26010-2"/>
</dbReference>
<dbReference type="ABCD" id="P26010">
    <property type="antibodies" value="4 sequenced antibodies"/>
</dbReference>
<dbReference type="Antibodypedia" id="26942">
    <property type="antibodies" value="561 antibodies from 38 providers"/>
</dbReference>
<dbReference type="DNASU" id="3695"/>
<dbReference type="Ensembl" id="ENST00000267082.10">
    <molecule id="P26010-1"/>
    <property type="protein sequence ID" value="ENSP00000267082.4"/>
    <property type="gene ID" value="ENSG00000139626.16"/>
</dbReference>
<dbReference type="Ensembl" id="ENST00000422257.7">
    <molecule id="P26010-1"/>
    <property type="protein sequence ID" value="ENSP00000408741.3"/>
    <property type="gene ID" value="ENSG00000139626.16"/>
</dbReference>
<dbReference type="Ensembl" id="ENST00000550743.6">
    <molecule id="P26010-2"/>
    <property type="protein sequence ID" value="ENSP00000455374.2"/>
    <property type="gene ID" value="ENSG00000139626.16"/>
</dbReference>
<dbReference type="GeneID" id="3695"/>
<dbReference type="KEGG" id="hsa:3695"/>
<dbReference type="MANE-Select" id="ENST00000267082.10">
    <property type="protein sequence ID" value="ENSP00000267082.4"/>
    <property type="RefSeq nucleotide sequence ID" value="NM_000889.3"/>
    <property type="RefSeq protein sequence ID" value="NP_000880.1"/>
</dbReference>
<dbReference type="UCSC" id="uc001scc.4">
    <molecule id="P26010-1"/>
    <property type="organism name" value="human"/>
</dbReference>
<dbReference type="AGR" id="HGNC:6162"/>
<dbReference type="CTD" id="3695"/>
<dbReference type="DisGeNET" id="3695"/>
<dbReference type="GeneCards" id="ITGB7"/>
<dbReference type="HGNC" id="HGNC:6162">
    <property type="gene designation" value="ITGB7"/>
</dbReference>
<dbReference type="HPA" id="ENSG00000139626">
    <property type="expression patterns" value="Tissue enhanced (lymphoid)"/>
</dbReference>
<dbReference type="MIM" id="147559">
    <property type="type" value="gene"/>
</dbReference>
<dbReference type="neXtProt" id="NX_P26010"/>
<dbReference type="OpenTargets" id="ENSG00000139626"/>
<dbReference type="PharmGKB" id="PA29961"/>
<dbReference type="VEuPathDB" id="HostDB:ENSG00000139626"/>
<dbReference type="eggNOG" id="KOG1226">
    <property type="taxonomic scope" value="Eukaryota"/>
</dbReference>
<dbReference type="GeneTree" id="ENSGT01130000278313"/>
<dbReference type="HOGENOM" id="CLU_011772_2_1_1"/>
<dbReference type="InParanoid" id="P26010"/>
<dbReference type="OMA" id="CECSMDT"/>
<dbReference type="OrthoDB" id="410592at2759"/>
<dbReference type="PAN-GO" id="P26010">
    <property type="GO annotations" value="8 GO annotations based on evolutionary models"/>
</dbReference>
<dbReference type="PhylomeDB" id="P26010"/>
<dbReference type="TreeFam" id="TF105392"/>
<dbReference type="PathwayCommons" id="P26010"/>
<dbReference type="Reactome" id="R-HSA-198933">
    <property type="pathway name" value="Immunoregulatory interactions between a Lymphoid and a non-Lymphoid cell"/>
</dbReference>
<dbReference type="Reactome" id="R-HSA-216083">
    <property type="pathway name" value="Integrin cell surface interactions"/>
</dbReference>
<dbReference type="SignaLink" id="P26010"/>
<dbReference type="SIGNOR" id="P26010"/>
<dbReference type="BioGRID-ORCS" id="3695">
    <property type="hits" value="230 hits in 1154 CRISPR screens"/>
</dbReference>
<dbReference type="ChiTaRS" id="ITGB7">
    <property type="organism name" value="human"/>
</dbReference>
<dbReference type="EvolutionaryTrace" id="P26010"/>
<dbReference type="GeneWiki" id="ITGB7"/>
<dbReference type="GenomeRNAi" id="3695"/>
<dbReference type="Pharos" id="P26010">
    <property type="development level" value="Tclin"/>
</dbReference>
<dbReference type="PRO" id="PR:P26010"/>
<dbReference type="Proteomes" id="UP000005640">
    <property type="component" value="Chromosome 12"/>
</dbReference>
<dbReference type="RNAct" id="P26010">
    <property type="molecule type" value="protein"/>
</dbReference>
<dbReference type="Bgee" id="ENSG00000139626">
    <property type="expression patterns" value="Expressed in granulocyte and 168 other cell types or tissues"/>
</dbReference>
<dbReference type="ExpressionAtlas" id="P26010">
    <property type="expression patterns" value="baseline and differential"/>
</dbReference>
<dbReference type="GO" id="GO:0009986">
    <property type="term" value="C:cell surface"/>
    <property type="evidence" value="ECO:0000314"/>
    <property type="project" value="UniProtKB"/>
</dbReference>
<dbReference type="GO" id="GO:0070062">
    <property type="term" value="C:extracellular exosome"/>
    <property type="evidence" value="ECO:0007005"/>
    <property type="project" value="UniProtKB"/>
</dbReference>
<dbReference type="GO" id="GO:0005925">
    <property type="term" value="C:focal adhesion"/>
    <property type="evidence" value="ECO:0000318"/>
    <property type="project" value="GO_Central"/>
</dbReference>
<dbReference type="GO" id="GO:0034669">
    <property type="term" value="C:integrin alpha4-beta7 complex"/>
    <property type="evidence" value="ECO:0000314"/>
    <property type="project" value="UniProtKB"/>
</dbReference>
<dbReference type="GO" id="GO:0008305">
    <property type="term" value="C:integrin complex"/>
    <property type="evidence" value="ECO:0000318"/>
    <property type="project" value="GO_Central"/>
</dbReference>
<dbReference type="GO" id="GO:0016020">
    <property type="term" value="C:membrane"/>
    <property type="evidence" value="ECO:0007005"/>
    <property type="project" value="UniProtKB"/>
</dbReference>
<dbReference type="GO" id="GO:0005886">
    <property type="term" value="C:plasma membrane"/>
    <property type="evidence" value="ECO:0000304"/>
    <property type="project" value="Reactome"/>
</dbReference>
<dbReference type="GO" id="GO:0043235">
    <property type="term" value="C:receptor complex"/>
    <property type="evidence" value="ECO:0000314"/>
    <property type="project" value="MGI"/>
</dbReference>
<dbReference type="GO" id="GO:0050839">
    <property type="term" value="F:cell adhesion molecule binding"/>
    <property type="evidence" value="ECO:0000315"/>
    <property type="project" value="UniProtKB"/>
</dbReference>
<dbReference type="GO" id="GO:0005178">
    <property type="term" value="F:integrin binding"/>
    <property type="evidence" value="ECO:0000318"/>
    <property type="project" value="GO_Central"/>
</dbReference>
<dbReference type="GO" id="GO:0046872">
    <property type="term" value="F:metal ion binding"/>
    <property type="evidence" value="ECO:0007669"/>
    <property type="project" value="UniProtKB-KW"/>
</dbReference>
<dbReference type="GO" id="GO:0001618">
    <property type="term" value="F:virus receptor activity"/>
    <property type="evidence" value="ECO:0007669"/>
    <property type="project" value="UniProtKB-KW"/>
</dbReference>
<dbReference type="GO" id="GO:0007155">
    <property type="term" value="P:cell adhesion"/>
    <property type="evidence" value="ECO:0000304"/>
    <property type="project" value="ProtInc"/>
</dbReference>
<dbReference type="GO" id="GO:0033627">
    <property type="term" value="P:cell adhesion mediated by integrin"/>
    <property type="evidence" value="ECO:0000318"/>
    <property type="project" value="GO_Central"/>
</dbReference>
<dbReference type="GO" id="GO:0098609">
    <property type="term" value="P:cell-cell adhesion"/>
    <property type="evidence" value="ECO:0000318"/>
    <property type="project" value="GO_Central"/>
</dbReference>
<dbReference type="GO" id="GO:0007160">
    <property type="term" value="P:cell-matrix adhesion"/>
    <property type="evidence" value="ECO:0000314"/>
    <property type="project" value="ComplexPortal"/>
</dbReference>
<dbReference type="GO" id="GO:0003366">
    <property type="term" value="P:cell-matrix adhesion involved in ameboidal cell migration"/>
    <property type="evidence" value="ECO:0000315"/>
    <property type="project" value="UniProtKB"/>
</dbReference>
<dbReference type="GO" id="GO:0034113">
    <property type="term" value="P:heterotypic cell-cell adhesion"/>
    <property type="evidence" value="ECO:0000315"/>
    <property type="project" value="UniProtKB"/>
</dbReference>
<dbReference type="GO" id="GO:0002387">
    <property type="term" value="P:immune response in gut-associated lymphoid tissue"/>
    <property type="evidence" value="ECO:0000303"/>
    <property type="project" value="ComplexPortal"/>
</dbReference>
<dbReference type="GO" id="GO:0007229">
    <property type="term" value="P:integrin-mediated signaling pathway"/>
    <property type="evidence" value="ECO:0000315"/>
    <property type="project" value="UniProtKB"/>
</dbReference>
<dbReference type="GO" id="GO:0050900">
    <property type="term" value="P:leukocyte migration"/>
    <property type="evidence" value="ECO:0000318"/>
    <property type="project" value="GO_Central"/>
</dbReference>
<dbReference type="GO" id="GO:0050901">
    <property type="term" value="P:leukocyte tethering or rolling"/>
    <property type="evidence" value="ECO:0000315"/>
    <property type="project" value="UniProtKB"/>
</dbReference>
<dbReference type="GO" id="GO:0043113">
    <property type="term" value="P:receptor clustering"/>
    <property type="evidence" value="ECO:0000315"/>
    <property type="project" value="UniProtKB"/>
</dbReference>
<dbReference type="GO" id="GO:0034446">
    <property type="term" value="P:substrate adhesion-dependent cell spreading"/>
    <property type="evidence" value="ECO:0000315"/>
    <property type="project" value="UniProtKB"/>
</dbReference>
<dbReference type="GO" id="GO:0072678">
    <property type="term" value="P:T cell migration"/>
    <property type="evidence" value="ECO:0007669"/>
    <property type="project" value="Ensembl"/>
</dbReference>
<dbReference type="FunFam" id="1.20.5.100:FF:000009">
    <property type="entry name" value="Integrin beta"/>
    <property type="match status" value="1"/>
</dbReference>
<dbReference type="FunFam" id="2.10.25.10:FF:000304">
    <property type="entry name" value="Integrin beta"/>
    <property type="match status" value="1"/>
</dbReference>
<dbReference type="FunFam" id="2.10.25.10:FF:000305">
    <property type="entry name" value="Integrin beta"/>
    <property type="match status" value="1"/>
</dbReference>
<dbReference type="FunFam" id="2.10.25.10:FF:000402">
    <property type="entry name" value="Integrin beta"/>
    <property type="match status" value="1"/>
</dbReference>
<dbReference type="FunFam" id="2.10.25.10:FF:000449">
    <property type="entry name" value="Integrin beta"/>
    <property type="match status" value="1"/>
</dbReference>
<dbReference type="FunFam" id="3.30.1680.10:FF:000014">
    <property type="entry name" value="Integrin beta"/>
    <property type="match status" value="1"/>
</dbReference>
<dbReference type="FunFam" id="3.40.50.410:FF:000002">
    <property type="entry name" value="Integrin beta"/>
    <property type="match status" value="1"/>
</dbReference>
<dbReference type="FunFam" id="2.60.40.1510:FF:000037">
    <property type="entry name" value="Integrin beta-7"/>
    <property type="match status" value="1"/>
</dbReference>
<dbReference type="Gene3D" id="1.20.5.100">
    <property type="entry name" value="Cytochrome c1, transmembrane anchor, C-terminal"/>
    <property type="match status" value="1"/>
</dbReference>
<dbReference type="Gene3D" id="2.10.25.10">
    <property type="entry name" value="Laminin"/>
    <property type="match status" value="4"/>
</dbReference>
<dbReference type="Gene3D" id="3.30.1680.10">
    <property type="entry name" value="ligand-binding face of the semaphorins, domain 2"/>
    <property type="match status" value="1"/>
</dbReference>
<dbReference type="Gene3D" id="2.60.40.1510">
    <property type="entry name" value="ntegrin, alpha v. Chain A, domain 3"/>
    <property type="match status" value="1"/>
</dbReference>
<dbReference type="Gene3D" id="3.40.50.410">
    <property type="entry name" value="von Willebrand factor, type A domain"/>
    <property type="match status" value="1"/>
</dbReference>
<dbReference type="IDEAL" id="IID00616"/>
<dbReference type="InterPro" id="IPR013111">
    <property type="entry name" value="EGF_extracell"/>
</dbReference>
<dbReference type="InterPro" id="IPR033760">
    <property type="entry name" value="Integrin_beta_N"/>
</dbReference>
<dbReference type="InterPro" id="IPR015812">
    <property type="entry name" value="Integrin_bsu"/>
</dbReference>
<dbReference type="InterPro" id="IPR014836">
    <property type="entry name" value="Integrin_bsu_cyt_dom"/>
</dbReference>
<dbReference type="InterPro" id="IPR012896">
    <property type="entry name" value="Integrin_bsu_tail"/>
</dbReference>
<dbReference type="InterPro" id="IPR036349">
    <property type="entry name" value="Integrin_bsu_tail_dom_sf"/>
</dbReference>
<dbReference type="InterPro" id="IPR002369">
    <property type="entry name" value="Integrin_bsu_VWA"/>
</dbReference>
<dbReference type="InterPro" id="IPR032695">
    <property type="entry name" value="Integrin_dom_sf"/>
</dbReference>
<dbReference type="InterPro" id="IPR016201">
    <property type="entry name" value="PSI"/>
</dbReference>
<dbReference type="InterPro" id="IPR036465">
    <property type="entry name" value="vWFA_dom_sf"/>
</dbReference>
<dbReference type="PANTHER" id="PTHR10082">
    <property type="entry name" value="INTEGRIN BETA SUBUNIT"/>
    <property type="match status" value="1"/>
</dbReference>
<dbReference type="PANTHER" id="PTHR10082:SF36">
    <property type="entry name" value="INTEGRIN BETA-7"/>
    <property type="match status" value="1"/>
</dbReference>
<dbReference type="Pfam" id="PF07974">
    <property type="entry name" value="EGF_2"/>
    <property type="match status" value="1"/>
</dbReference>
<dbReference type="Pfam" id="PF08725">
    <property type="entry name" value="Integrin_b_cyt"/>
    <property type="match status" value="1"/>
</dbReference>
<dbReference type="Pfam" id="PF00362">
    <property type="entry name" value="Integrin_beta"/>
    <property type="match status" value="1"/>
</dbReference>
<dbReference type="Pfam" id="PF17205">
    <property type="entry name" value="PSI_integrin"/>
    <property type="match status" value="1"/>
</dbReference>
<dbReference type="PIRSF" id="PIRSF002512">
    <property type="entry name" value="Integrin_B"/>
    <property type="match status" value="1"/>
</dbReference>
<dbReference type="PRINTS" id="PR01186">
    <property type="entry name" value="INTEGRINB"/>
</dbReference>
<dbReference type="SMART" id="SM00187">
    <property type="entry name" value="INB"/>
    <property type="match status" value="1"/>
</dbReference>
<dbReference type="SMART" id="SM01241">
    <property type="entry name" value="Integrin_b_cyt"/>
    <property type="match status" value="1"/>
</dbReference>
<dbReference type="SMART" id="SM01242">
    <property type="entry name" value="Integrin_B_tail"/>
    <property type="match status" value="1"/>
</dbReference>
<dbReference type="SMART" id="SM00423">
    <property type="entry name" value="PSI"/>
    <property type="match status" value="1"/>
</dbReference>
<dbReference type="SUPFAM" id="SSF57196">
    <property type="entry name" value="EGF/Laminin"/>
    <property type="match status" value="2"/>
</dbReference>
<dbReference type="SUPFAM" id="SSF69687">
    <property type="entry name" value="Integrin beta tail domain"/>
    <property type="match status" value="1"/>
</dbReference>
<dbReference type="SUPFAM" id="SSF69179">
    <property type="entry name" value="Integrin domains"/>
    <property type="match status" value="1"/>
</dbReference>
<dbReference type="SUPFAM" id="SSF103575">
    <property type="entry name" value="Plexin repeat"/>
    <property type="match status" value="1"/>
</dbReference>
<dbReference type="SUPFAM" id="SSF53300">
    <property type="entry name" value="vWA-like"/>
    <property type="match status" value="1"/>
</dbReference>
<dbReference type="PROSITE" id="PS00022">
    <property type="entry name" value="EGF_1"/>
    <property type="match status" value="4"/>
</dbReference>
<dbReference type="PROSITE" id="PS01186">
    <property type="entry name" value="EGF_2"/>
    <property type="match status" value="1"/>
</dbReference>
<dbReference type="PROSITE" id="PS00243">
    <property type="entry name" value="I_EGF_1"/>
    <property type="match status" value="3"/>
</dbReference>
<dbReference type="PROSITE" id="PS52047">
    <property type="entry name" value="I_EGF_2"/>
    <property type="match status" value="4"/>
</dbReference>
<name>ITB7_HUMAN</name>